<keyword id="KW-0007">Acetylation</keyword>
<keyword id="KW-0106">Calcium</keyword>
<keyword id="KW-0148">Chlorophyll</keyword>
<keyword id="KW-0150">Chloroplast</keyword>
<keyword id="KW-0157">Chromophore</keyword>
<keyword id="KW-0249">Electron transport</keyword>
<keyword id="KW-0359">Herbicide resistance</keyword>
<keyword id="KW-0408">Iron</keyword>
<keyword id="KW-0460">Magnesium</keyword>
<keyword id="KW-0464">Manganese</keyword>
<keyword id="KW-0472">Membrane</keyword>
<keyword id="KW-0479">Metal-binding</keyword>
<keyword id="KW-0560">Oxidoreductase</keyword>
<keyword id="KW-0597">Phosphoprotein</keyword>
<keyword id="KW-0602">Photosynthesis</keyword>
<keyword id="KW-0604">Photosystem II</keyword>
<keyword id="KW-0934">Plastid</keyword>
<keyword id="KW-1185">Reference proteome</keyword>
<keyword id="KW-0793">Thylakoid</keyword>
<keyword id="KW-0812">Transmembrane</keyword>
<keyword id="KW-1133">Transmembrane helix</keyword>
<keyword id="KW-0813">Transport</keyword>
<feature type="initiator methionine" description="Removed" evidence="1">
    <location>
        <position position="1"/>
    </location>
</feature>
<feature type="chain" id="PRO_0000339974" description="Photosystem II protein D1" evidence="1">
    <location>
        <begin position="2"/>
        <end position="344"/>
    </location>
</feature>
<feature type="propeptide" id="PRO_0000339975" evidence="1">
    <location>
        <begin position="345"/>
        <end position="353"/>
    </location>
</feature>
<feature type="transmembrane region" description="Helical" evidence="1">
    <location>
        <begin position="29"/>
        <end position="46"/>
    </location>
</feature>
<feature type="transmembrane region" description="Helical" evidence="1">
    <location>
        <begin position="118"/>
        <end position="133"/>
    </location>
</feature>
<feature type="transmembrane region" description="Helical" evidence="1">
    <location>
        <begin position="142"/>
        <end position="156"/>
    </location>
</feature>
<feature type="transmembrane region" description="Helical" evidence="1">
    <location>
        <begin position="197"/>
        <end position="218"/>
    </location>
</feature>
<feature type="transmembrane region" description="Helical" evidence="1">
    <location>
        <begin position="274"/>
        <end position="288"/>
    </location>
</feature>
<feature type="binding site" description="axial binding residue" evidence="1">
    <location>
        <position position="118"/>
    </location>
    <ligand>
        <name>chlorophyll a</name>
        <dbReference type="ChEBI" id="CHEBI:58416"/>
        <label>ChlzD1</label>
    </ligand>
    <ligandPart>
        <name>Mg</name>
        <dbReference type="ChEBI" id="CHEBI:25107"/>
    </ligandPart>
</feature>
<feature type="binding site" evidence="1">
    <location>
        <position position="126"/>
    </location>
    <ligand>
        <name>pheophytin a</name>
        <dbReference type="ChEBI" id="CHEBI:136840"/>
        <label>D1</label>
    </ligand>
</feature>
<feature type="binding site" evidence="1">
    <location>
        <position position="170"/>
    </location>
    <ligand>
        <name>[CaMn4O5] cluster</name>
        <dbReference type="ChEBI" id="CHEBI:189552"/>
    </ligand>
</feature>
<feature type="binding site" evidence="1">
    <location>
        <position position="189"/>
    </location>
    <ligand>
        <name>[CaMn4O5] cluster</name>
        <dbReference type="ChEBI" id="CHEBI:189552"/>
    </ligand>
</feature>
<feature type="binding site" description="axial binding residue" evidence="1">
    <location>
        <position position="198"/>
    </location>
    <ligand>
        <name>chlorophyll a</name>
        <dbReference type="ChEBI" id="CHEBI:58416"/>
        <label>PD1</label>
    </ligand>
    <ligandPart>
        <name>Mg</name>
        <dbReference type="ChEBI" id="CHEBI:25107"/>
    </ligandPart>
</feature>
<feature type="binding site" evidence="1">
    <location>
        <position position="215"/>
    </location>
    <ligand>
        <name>a quinone</name>
        <dbReference type="ChEBI" id="CHEBI:132124"/>
        <label>B</label>
    </ligand>
</feature>
<feature type="binding site" evidence="1">
    <location>
        <position position="215"/>
    </location>
    <ligand>
        <name>Fe cation</name>
        <dbReference type="ChEBI" id="CHEBI:24875"/>
        <note>ligand shared with heterodimeric partner</note>
    </ligand>
</feature>
<feature type="binding site" evidence="1">
    <location>
        <begin position="264"/>
        <end position="265"/>
    </location>
    <ligand>
        <name>a quinone</name>
        <dbReference type="ChEBI" id="CHEBI:132124"/>
        <label>B</label>
    </ligand>
</feature>
<feature type="binding site" evidence="1">
    <location>
        <position position="272"/>
    </location>
    <ligand>
        <name>Fe cation</name>
        <dbReference type="ChEBI" id="CHEBI:24875"/>
        <note>ligand shared with heterodimeric partner</note>
    </ligand>
</feature>
<feature type="binding site" evidence="1">
    <location>
        <position position="332"/>
    </location>
    <ligand>
        <name>[CaMn4O5] cluster</name>
        <dbReference type="ChEBI" id="CHEBI:189552"/>
    </ligand>
</feature>
<feature type="binding site" evidence="1">
    <location>
        <position position="333"/>
    </location>
    <ligand>
        <name>[CaMn4O5] cluster</name>
        <dbReference type="ChEBI" id="CHEBI:189552"/>
    </ligand>
</feature>
<feature type="binding site" evidence="1">
    <location>
        <position position="342"/>
    </location>
    <ligand>
        <name>[CaMn4O5] cluster</name>
        <dbReference type="ChEBI" id="CHEBI:189552"/>
    </ligand>
</feature>
<feature type="binding site" evidence="1">
    <location>
        <position position="344"/>
    </location>
    <ligand>
        <name>[CaMn4O5] cluster</name>
        <dbReference type="ChEBI" id="CHEBI:189552"/>
    </ligand>
</feature>
<feature type="site" description="Tyrosine radical intermediate" evidence="1">
    <location>
        <position position="161"/>
    </location>
</feature>
<feature type="site" description="Stabilizes free radical intermediate" evidence="1">
    <location>
        <position position="190"/>
    </location>
</feature>
<feature type="site" description="Cleavage; by CTPA" evidence="1">
    <location>
        <begin position="344"/>
        <end position="345"/>
    </location>
</feature>
<feature type="modified residue" description="N-acetylthreonine" evidence="1">
    <location>
        <position position="2"/>
    </location>
</feature>
<feature type="modified residue" description="Phosphothreonine" evidence="1">
    <location>
        <position position="2"/>
    </location>
</feature>
<sequence>MTAILERRESESLWGRFCNWITSTENRLYIGWFGVLMIPTLLTATSVFIIAFIAAPPVDIDGIREPVSGSLLYGNNIISGAIIPTSAAIGLHFYPIWEAASVDEWLYNGGPYELIVLHFLLGVACYMGREWELSFRLGMRPWIAVAYSAPVAAATAVFLIYPIGQGSFSDGMPLGISGTFNFMIVFQAEHNILMHPFHMLGVAGVFGGSLFSAMHGSLVTSSLIRETTENESANAGYRFGQEEETYNIVAAHGYFGRLIFQYASFNNSRSLHFFLAAWPVVGIWFTSLGISTMAFNLNGFNFNQSVVDSQGRVINTWADIINRANLGMEVMHERNAHNFPLDLAAIDAPSVNG</sequence>
<accession>A0A315</accession>
<name>PSBA_COFAR</name>
<evidence type="ECO:0000255" key="1">
    <source>
        <dbReference type="HAMAP-Rule" id="MF_01379"/>
    </source>
</evidence>
<gene>
    <name evidence="1" type="primary">psbA</name>
</gene>
<organism>
    <name type="scientific">Coffea arabica</name>
    <name type="common">Arabian coffee</name>
    <dbReference type="NCBI Taxonomy" id="13443"/>
    <lineage>
        <taxon>Eukaryota</taxon>
        <taxon>Viridiplantae</taxon>
        <taxon>Streptophyta</taxon>
        <taxon>Embryophyta</taxon>
        <taxon>Tracheophyta</taxon>
        <taxon>Spermatophyta</taxon>
        <taxon>Magnoliopsida</taxon>
        <taxon>eudicotyledons</taxon>
        <taxon>Gunneridae</taxon>
        <taxon>Pentapetalae</taxon>
        <taxon>asterids</taxon>
        <taxon>lamiids</taxon>
        <taxon>Gentianales</taxon>
        <taxon>Rubiaceae</taxon>
        <taxon>Ixoroideae</taxon>
        <taxon>Gardenieae complex</taxon>
        <taxon>Bertiereae - Coffeeae clade</taxon>
        <taxon>Coffeeae</taxon>
        <taxon>Coffea</taxon>
    </lineage>
</organism>
<proteinExistence type="inferred from homology"/>
<protein>
    <recommendedName>
        <fullName evidence="1">Photosystem II protein D1</fullName>
        <shortName evidence="1">PSII D1 protein</shortName>
        <ecNumber evidence="1">1.10.3.9</ecNumber>
    </recommendedName>
    <alternativeName>
        <fullName evidence="1">Photosystem II Q(B) protein</fullName>
    </alternativeName>
</protein>
<reference key="1">
    <citation type="journal article" date="2007" name="Plant Biotechnol. J.">
        <title>The complete nucleotide sequence of the coffee (Coffea arabica L.) chloroplast genome: organization and implications for biotechnology and phylogenetic relationships amongst angiosperms.</title>
        <authorList>
            <person name="Samson N."/>
            <person name="Bausher M.G."/>
            <person name="Lee S.-B."/>
            <person name="Jansen R.K."/>
            <person name="Daniell H."/>
        </authorList>
    </citation>
    <scope>NUCLEOTIDE SEQUENCE [LARGE SCALE GENOMIC DNA]</scope>
</reference>
<comment type="function">
    <text evidence="1">Photosystem II (PSII) is a light-driven water:plastoquinone oxidoreductase that uses light energy to abstract electrons from H(2)O, generating O(2) and a proton gradient subsequently used for ATP formation. It consists of a core antenna complex that captures photons, and an electron transfer chain that converts photonic excitation into a charge separation. The D1/D2 (PsbA/PsbD) reaction center heterodimer binds P680, the primary electron donor of PSII as well as several subsequent electron acceptors.</text>
</comment>
<comment type="catalytic activity">
    <reaction evidence="1">
        <text>2 a plastoquinone + 4 hnu + 2 H2O = 2 a plastoquinol + O2</text>
        <dbReference type="Rhea" id="RHEA:36359"/>
        <dbReference type="Rhea" id="RHEA-COMP:9561"/>
        <dbReference type="Rhea" id="RHEA-COMP:9562"/>
        <dbReference type="ChEBI" id="CHEBI:15377"/>
        <dbReference type="ChEBI" id="CHEBI:15379"/>
        <dbReference type="ChEBI" id="CHEBI:17757"/>
        <dbReference type="ChEBI" id="CHEBI:30212"/>
        <dbReference type="ChEBI" id="CHEBI:62192"/>
        <dbReference type="EC" id="1.10.3.9"/>
    </reaction>
</comment>
<comment type="cofactor">
    <text evidence="1">The D1/D2 heterodimer binds P680, chlorophylls that are the primary electron donor of PSII, and subsequent electron acceptors. It shares a non-heme iron and each subunit binds pheophytin, quinone, additional chlorophylls, carotenoids and lipids. D1 provides most of the ligands for the Mn4-Ca-O5 cluster of the oxygen-evolving complex (OEC). There is also a Cl(-1) ion associated with D1 and D2, which is required for oxygen evolution. The PSII complex binds additional chlorophylls, carotenoids and specific lipids.</text>
</comment>
<comment type="subunit">
    <text evidence="1">PSII is composed of 1 copy each of membrane proteins PsbA, PsbB, PsbC, PsbD, PsbE, PsbF, PsbH, PsbI, PsbJ, PsbK, PsbL, PsbM, PsbT, PsbX, PsbY, PsbZ, Psb30/Ycf12, at least 3 peripheral proteins of the oxygen-evolving complex and a large number of cofactors. It forms dimeric complexes.</text>
</comment>
<comment type="subcellular location">
    <subcellularLocation>
        <location evidence="1">Plastid</location>
        <location evidence="1">Chloroplast thylakoid membrane</location>
        <topology evidence="1">Multi-pass membrane protein</topology>
    </subcellularLocation>
</comment>
<comment type="PTM">
    <text evidence="1">Tyr-161 forms a radical intermediate that is referred to as redox-active TyrZ, YZ or Y-Z.</text>
</comment>
<comment type="PTM">
    <text evidence="1">C-terminally processed by CTPA; processing is essential to allow assembly of the oxygen-evolving complex and thus photosynthetic growth.</text>
</comment>
<comment type="miscellaneous">
    <text evidence="1">2 of the reaction center chlorophylls (ChlD1 and ChlD2) are entirely coordinated by water.</text>
</comment>
<comment type="miscellaneous">
    <text evidence="1">Herbicides such as atrazine, BNT, diuron or ioxynil bind in the Q(B) binding site and block subsequent electron transfer.</text>
</comment>
<comment type="similarity">
    <text evidence="1">Belongs to the reaction center PufL/M/PsbA/D family.</text>
</comment>
<dbReference type="EC" id="1.10.3.9" evidence="1"/>
<dbReference type="EMBL" id="EF044213">
    <property type="protein sequence ID" value="ABJ89659.1"/>
    <property type="molecule type" value="Genomic_DNA"/>
</dbReference>
<dbReference type="RefSeq" id="YP_817462.1">
    <property type="nucleotide sequence ID" value="NC_008535.1"/>
</dbReference>
<dbReference type="SMR" id="A0A315"/>
<dbReference type="GeneID" id="4421839"/>
<dbReference type="OrthoDB" id="143at2759"/>
<dbReference type="Proteomes" id="UP000515148">
    <property type="component" value="Chloroplast Pltd"/>
</dbReference>
<dbReference type="GO" id="GO:0009535">
    <property type="term" value="C:chloroplast thylakoid membrane"/>
    <property type="evidence" value="ECO:0007669"/>
    <property type="project" value="UniProtKB-SubCell"/>
</dbReference>
<dbReference type="GO" id="GO:0009523">
    <property type="term" value="C:photosystem II"/>
    <property type="evidence" value="ECO:0007669"/>
    <property type="project" value="UniProtKB-KW"/>
</dbReference>
<dbReference type="GO" id="GO:0016168">
    <property type="term" value="F:chlorophyll binding"/>
    <property type="evidence" value="ECO:0007669"/>
    <property type="project" value="UniProtKB-UniRule"/>
</dbReference>
<dbReference type="GO" id="GO:0045156">
    <property type="term" value="F:electron transporter, transferring electrons within the cyclic electron transport pathway of photosynthesis activity"/>
    <property type="evidence" value="ECO:0007669"/>
    <property type="project" value="InterPro"/>
</dbReference>
<dbReference type="GO" id="GO:0005506">
    <property type="term" value="F:iron ion binding"/>
    <property type="evidence" value="ECO:0007669"/>
    <property type="project" value="UniProtKB-UniRule"/>
</dbReference>
<dbReference type="GO" id="GO:0016682">
    <property type="term" value="F:oxidoreductase activity, acting on diphenols and related substances as donors, oxygen as acceptor"/>
    <property type="evidence" value="ECO:0007669"/>
    <property type="project" value="UniProtKB-UniRule"/>
</dbReference>
<dbReference type="GO" id="GO:0010242">
    <property type="term" value="F:oxygen evolving activity"/>
    <property type="evidence" value="ECO:0007669"/>
    <property type="project" value="UniProtKB-EC"/>
</dbReference>
<dbReference type="GO" id="GO:0009772">
    <property type="term" value="P:photosynthetic electron transport in photosystem II"/>
    <property type="evidence" value="ECO:0007669"/>
    <property type="project" value="InterPro"/>
</dbReference>
<dbReference type="GO" id="GO:0009635">
    <property type="term" value="P:response to herbicide"/>
    <property type="evidence" value="ECO:0007669"/>
    <property type="project" value="UniProtKB-KW"/>
</dbReference>
<dbReference type="CDD" id="cd09289">
    <property type="entry name" value="Photosystem-II_D1"/>
    <property type="match status" value="1"/>
</dbReference>
<dbReference type="FunFam" id="1.20.85.10:FF:000002">
    <property type="entry name" value="Photosystem II protein D1"/>
    <property type="match status" value="1"/>
</dbReference>
<dbReference type="Gene3D" id="1.20.85.10">
    <property type="entry name" value="Photosystem II protein D1-like"/>
    <property type="match status" value="1"/>
</dbReference>
<dbReference type="HAMAP" id="MF_01379">
    <property type="entry name" value="PSII_PsbA_D1"/>
    <property type="match status" value="1"/>
</dbReference>
<dbReference type="InterPro" id="IPR055266">
    <property type="entry name" value="D1/D2"/>
</dbReference>
<dbReference type="InterPro" id="IPR036854">
    <property type="entry name" value="Photo_II_D1/D2_sf"/>
</dbReference>
<dbReference type="InterPro" id="IPR000484">
    <property type="entry name" value="Photo_RC_L/M"/>
</dbReference>
<dbReference type="InterPro" id="IPR055265">
    <property type="entry name" value="Photo_RC_L/M_CS"/>
</dbReference>
<dbReference type="InterPro" id="IPR005867">
    <property type="entry name" value="PSII_D1"/>
</dbReference>
<dbReference type="NCBIfam" id="TIGR01151">
    <property type="entry name" value="psbA"/>
    <property type="match status" value="1"/>
</dbReference>
<dbReference type="PANTHER" id="PTHR33149:SF12">
    <property type="entry name" value="PHOTOSYSTEM II D2 PROTEIN"/>
    <property type="match status" value="1"/>
</dbReference>
<dbReference type="PANTHER" id="PTHR33149">
    <property type="entry name" value="PHOTOSYSTEM II PROTEIN D1"/>
    <property type="match status" value="1"/>
</dbReference>
<dbReference type="Pfam" id="PF00124">
    <property type="entry name" value="Photo_RC"/>
    <property type="match status" value="1"/>
</dbReference>
<dbReference type="PRINTS" id="PR00256">
    <property type="entry name" value="REACTNCENTRE"/>
</dbReference>
<dbReference type="SUPFAM" id="SSF81483">
    <property type="entry name" value="Bacterial photosystem II reaction centre, L and M subunits"/>
    <property type="match status" value="1"/>
</dbReference>
<dbReference type="PROSITE" id="PS00244">
    <property type="entry name" value="REACTION_CENTER"/>
    <property type="match status" value="1"/>
</dbReference>
<geneLocation type="chloroplast"/>